<evidence type="ECO:0000250" key="1">
    <source>
        <dbReference type="UniProtKB" id="P62487"/>
    </source>
</evidence>
<evidence type="ECO:0000250" key="2">
    <source>
        <dbReference type="UniProtKB" id="Q89907"/>
    </source>
</evidence>
<evidence type="ECO:0000305" key="3"/>
<feature type="chain" id="PRO_0000373655" description="DNA-directed RNA polymerase RPB7 homolog">
    <location>
        <begin position="1"/>
        <end position="335"/>
    </location>
</feature>
<keyword id="KW-0240">DNA-directed RNA polymerase</keyword>
<keyword id="KW-0244">Early protein</keyword>
<keyword id="KW-1035">Host cytoplasm</keyword>
<keyword id="KW-0804">Transcription</keyword>
<keyword id="KW-1195">Viral transcription</keyword>
<keyword id="KW-0946">Virion</keyword>
<organismHost>
    <name type="scientific">Ornithodoros</name>
    <name type="common">relapsing fever ticks</name>
    <dbReference type="NCBI Taxonomy" id="6937"/>
</organismHost>
<organismHost>
    <name type="scientific">Phacochoerus aethiopicus</name>
    <name type="common">Warthog</name>
    <dbReference type="NCBI Taxonomy" id="85517"/>
</organismHost>
<organismHost>
    <name type="scientific">Phacochoerus africanus</name>
    <name type="common">Warthog</name>
    <dbReference type="NCBI Taxonomy" id="41426"/>
</organismHost>
<organismHost>
    <name type="scientific">Potamochoerus larvatus</name>
    <name type="common">Bushpig</name>
    <dbReference type="NCBI Taxonomy" id="273792"/>
</organismHost>
<organismHost>
    <name type="scientific">Sus scrofa</name>
    <name type="common">Pig</name>
    <dbReference type="NCBI Taxonomy" id="9823"/>
</organismHost>
<reference key="1">
    <citation type="journal article" date="1994" name="J. Gen. Virol.">
        <title>Nucleotide sequence of a 55 kbp region from the right end of the genome of a pathogenic African swine fever virus isolate (Malawi LIL20/1).</title>
        <authorList>
            <person name="Dixon L.K."/>
            <person name="Twigg S.R.F."/>
            <person name="Baylis S.A."/>
            <person name="Vydelingum S."/>
            <person name="Bristow C."/>
            <person name="Hammond J.M."/>
            <person name="Smith G.L."/>
        </authorList>
    </citation>
    <scope>NUCLEOTIDE SEQUENCE [GENOMIC DNA]</scope>
</reference>
<reference key="2">
    <citation type="submission" date="2003-03" db="EMBL/GenBank/DDBJ databases">
        <title>African swine fever virus genomes.</title>
        <authorList>
            <person name="Kutish G.F."/>
            <person name="Rock D.L."/>
        </authorList>
    </citation>
    <scope>NUCLEOTIDE SEQUENCE [LARGE SCALE GENOMIC DNA]</scope>
</reference>
<sequence>MIDQKIFETTLNIDDPANFCTNVEAHLLKELENIYVGKCFKNSFILNITGVIQRSPCFIMRTNNSGRGYMHVRFSALVSCLNAFDLIAAVKIIKNDSNIILGESLLTEPVTIVIPSSESQNNVAEVGQIVPVQLANSSVYYIPGRQQASATGSIFIPKHTFSVYHVQEELTQEQALNLTKLVNIIEMLLESRSKKDFKQICFFEKLYYTYSINSDEILDLKIWKGPKGKEMARLKPCNVLSFLYDALKNKSSSLGFWARPPDLFKSSPLAYQQDQNSFNTTELPIICSAEVMFVTLLKEIINYLQFMNDLCDTFNNEQLIKRHENIWMLIEQKKI</sequence>
<dbReference type="EMBL" id="X71982">
    <property type="protein sequence ID" value="CAA50811.1"/>
    <property type="molecule type" value="Genomic_DNA"/>
</dbReference>
<dbReference type="EMBL" id="AY261361">
    <property type="status" value="NOT_ANNOTATED_CDS"/>
    <property type="molecule type" value="Genomic_DNA"/>
</dbReference>
<dbReference type="SMR" id="Q65221"/>
<dbReference type="Proteomes" id="UP000000860">
    <property type="component" value="Segment"/>
</dbReference>
<dbReference type="GO" id="GO:0000428">
    <property type="term" value="C:DNA-directed RNA polymerase complex"/>
    <property type="evidence" value="ECO:0007669"/>
    <property type="project" value="UniProtKB-KW"/>
</dbReference>
<dbReference type="GO" id="GO:0030430">
    <property type="term" value="C:host cell cytoplasm"/>
    <property type="evidence" value="ECO:0007669"/>
    <property type="project" value="UniProtKB-SubCell"/>
</dbReference>
<dbReference type="GO" id="GO:0044423">
    <property type="term" value="C:virion component"/>
    <property type="evidence" value="ECO:0007669"/>
    <property type="project" value="UniProtKB-KW"/>
</dbReference>
<dbReference type="GO" id="GO:0019083">
    <property type="term" value="P:viral transcription"/>
    <property type="evidence" value="ECO:0007669"/>
    <property type="project" value="UniProtKB-KW"/>
</dbReference>
<proteinExistence type="inferred from homology"/>
<gene>
    <name type="ordered locus">Mal-113</name>
    <name type="ORF">g9L</name>
</gene>
<comment type="function">
    <text evidence="1">Component of the DNA-directed RNA polymerase (RNAP) that catalyzes the transcription in the cytoplasm of viral DNA into RNA using the four ribonucleoside triphosphates as substrates.</text>
</comment>
<comment type="subunit">
    <text evidence="2">Part of the viral DNA-directed RNA polymerase that consists of 8 polII-like subunits (RPB1, RPB2, RPB3, RPB5, RPB6, RPB7, RPB9, RPB10), a capping enzyme and a termination factor.</text>
</comment>
<comment type="subcellular location">
    <subcellularLocation>
        <location evidence="3">Host cytoplasm</location>
    </subcellularLocation>
    <subcellularLocation>
        <location evidence="2">Virion</location>
    </subcellularLocation>
    <text evidence="2">Found in association with viral nucleoid.</text>
</comment>
<comment type="induction">
    <text evidence="2">Expressed in the early phase of the viral replicative cycle.</text>
</comment>
<comment type="domain">
    <text evidence="2">Contains an extended C-terminus, with no homology to characterized proteins.</text>
</comment>
<comment type="similarity">
    <text evidence="3">Belongs to the Asfivirus DNA-directed RNA polymerase RPB7 homolog family.</text>
</comment>
<accession>Q65221</accession>
<organism>
    <name type="scientific">African swine fever virus (isolate Tick/Malawi/Lil 20-1/1983)</name>
    <name type="common">ASFV</name>
    <dbReference type="NCBI Taxonomy" id="10500"/>
    <lineage>
        <taxon>Viruses</taxon>
        <taxon>Varidnaviria</taxon>
        <taxon>Bamfordvirae</taxon>
        <taxon>Nucleocytoviricota</taxon>
        <taxon>Pokkesviricetes</taxon>
        <taxon>Asfuvirales</taxon>
        <taxon>Asfarviridae</taxon>
        <taxon>Asfivirus</taxon>
        <taxon>African swine fever virus</taxon>
    </lineage>
</organism>
<protein>
    <recommendedName>
        <fullName evidence="2">DNA-directed RNA polymerase RPB7 homolog</fullName>
        <shortName evidence="3">RPB7 homolog</shortName>
    </recommendedName>
</protein>
<name>RPB7_ASFM2</name>